<evidence type="ECO:0000255" key="1">
    <source>
        <dbReference type="HAMAP-Rule" id="MF_00409"/>
    </source>
</evidence>
<protein>
    <recommendedName>
        <fullName evidence="1">Tetraacyldisaccharide 4'-kinase</fullName>
        <ecNumber evidence="1">2.7.1.130</ecNumber>
    </recommendedName>
    <alternativeName>
        <fullName evidence="1">Lipid A 4'-kinase</fullName>
    </alternativeName>
</protein>
<accession>B2VC73</accession>
<organism>
    <name type="scientific">Erwinia tasmaniensis (strain DSM 17950 / CFBP 7177 / CIP 109463 / NCPPB 4357 / Et1/99)</name>
    <dbReference type="NCBI Taxonomy" id="465817"/>
    <lineage>
        <taxon>Bacteria</taxon>
        <taxon>Pseudomonadati</taxon>
        <taxon>Pseudomonadota</taxon>
        <taxon>Gammaproteobacteria</taxon>
        <taxon>Enterobacterales</taxon>
        <taxon>Erwiniaceae</taxon>
        <taxon>Erwinia</taxon>
    </lineage>
</organism>
<feature type="chain" id="PRO_1000123716" description="Tetraacyldisaccharide 4'-kinase">
    <location>
        <begin position="1"/>
        <end position="326"/>
    </location>
</feature>
<feature type="binding site" evidence="1">
    <location>
        <begin position="55"/>
        <end position="62"/>
    </location>
    <ligand>
        <name>ATP</name>
        <dbReference type="ChEBI" id="CHEBI:30616"/>
    </ligand>
</feature>
<dbReference type="EC" id="2.7.1.130" evidence="1"/>
<dbReference type="EMBL" id="CU468135">
    <property type="protein sequence ID" value="CAO97184.1"/>
    <property type="molecule type" value="Genomic_DNA"/>
</dbReference>
<dbReference type="RefSeq" id="WP_012441855.1">
    <property type="nucleotide sequence ID" value="NC_010694.1"/>
</dbReference>
<dbReference type="SMR" id="B2VC73"/>
<dbReference type="STRING" id="465817.ETA_21380"/>
<dbReference type="KEGG" id="eta:ETA_21380"/>
<dbReference type="eggNOG" id="COG1663">
    <property type="taxonomic scope" value="Bacteria"/>
</dbReference>
<dbReference type="HOGENOM" id="CLU_038816_2_0_6"/>
<dbReference type="OrthoDB" id="9766423at2"/>
<dbReference type="UniPathway" id="UPA00359">
    <property type="reaction ID" value="UER00482"/>
</dbReference>
<dbReference type="Proteomes" id="UP000001726">
    <property type="component" value="Chromosome"/>
</dbReference>
<dbReference type="GO" id="GO:0005886">
    <property type="term" value="C:plasma membrane"/>
    <property type="evidence" value="ECO:0007669"/>
    <property type="project" value="TreeGrafter"/>
</dbReference>
<dbReference type="GO" id="GO:0005524">
    <property type="term" value="F:ATP binding"/>
    <property type="evidence" value="ECO:0007669"/>
    <property type="project" value="UniProtKB-UniRule"/>
</dbReference>
<dbReference type="GO" id="GO:0009029">
    <property type="term" value="F:tetraacyldisaccharide 4'-kinase activity"/>
    <property type="evidence" value="ECO:0007669"/>
    <property type="project" value="UniProtKB-UniRule"/>
</dbReference>
<dbReference type="GO" id="GO:0009245">
    <property type="term" value="P:lipid A biosynthetic process"/>
    <property type="evidence" value="ECO:0007669"/>
    <property type="project" value="UniProtKB-UniRule"/>
</dbReference>
<dbReference type="GO" id="GO:0009244">
    <property type="term" value="P:lipopolysaccharide core region biosynthetic process"/>
    <property type="evidence" value="ECO:0007669"/>
    <property type="project" value="TreeGrafter"/>
</dbReference>
<dbReference type="HAMAP" id="MF_00409">
    <property type="entry name" value="LpxK"/>
    <property type="match status" value="1"/>
</dbReference>
<dbReference type="InterPro" id="IPR003758">
    <property type="entry name" value="LpxK"/>
</dbReference>
<dbReference type="InterPro" id="IPR027417">
    <property type="entry name" value="P-loop_NTPase"/>
</dbReference>
<dbReference type="NCBIfam" id="TIGR00682">
    <property type="entry name" value="lpxK"/>
    <property type="match status" value="1"/>
</dbReference>
<dbReference type="PANTHER" id="PTHR42724">
    <property type="entry name" value="TETRAACYLDISACCHARIDE 4'-KINASE"/>
    <property type="match status" value="1"/>
</dbReference>
<dbReference type="PANTHER" id="PTHR42724:SF1">
    <property type="entry name" value="TETRAACYLDISACCHARIDE 4'-KINASE, MITOCHONDRIAL-RELATED"/>
    <property type="match status" value="1"/>
</dbReference>
<dbReference type="Pfam" id="PF02606">
    <property type="entry name" value="LpxK"/>
    <property type="match status" value="1"/>
</dbReference>
<dbReference type="SUPFAM" id="SSF52540">
    <property type="entry name" value="P-loop containing nucleoside triphosphate hydrolases"/>
    <property type="match status" value="1"/>
</dbReference>
<name>LPXK_ERWT9</name>
<comment type="function">
    <text evidence="1">Transfers the gamma-phosphate of ATP to the 4'-position of a tetraacyldisaccharide 1-phosphate intermediate (termed DS-1-P) to form tetraacyldisaccharide 1,4'-bis-phosphate (lipid IVA).</text>
</comment>
<comment type="catalytic activity">
    <reaction evidence="1">
        <text>a lipid A disaccharide + ATP = a lipid IVA + ADP + H(+)</text>
        <dbReference type="Rhea" id="RHEA:67840"/>
        <dbReference type="ChEBI" id="CHEBI:15378"/>
        <dbReference type="ChEBI" id="CHEBI:30616"/>
        <dbReference type="ChEBI" id="CHEBI:176343"/>
        <dbReference type="ChEBI" id="CHEBI:176425"/>
        <dbReference type="ChEBI" id="CHEBI:456216"/>
        <dbReference type="EC" id="2.7.1.130"/>
    </reaction>
</comment>
<comment type="pathway">
    <text evidence="1">Glycolipid biosynthesis; lipid IV(A) biosynthesis; lipid IV(A) from (3R)-3-hydroxytetradecanoyl-[acyl-carrier-protein] and UDP-N-acetyl-alpha-D-glucosamine: step 6/6.</text>
</comment>
<comment type="similarity">
    <text evidence="1">Belongs to the LpxK family.</text>
</comment>
<sequence length="326" mass="35394">MIERIWSGRNALYLLLLPFSLFYGLISNFTRLSYRWGWRKAWRAPVPVVVVGNLTAGGNGKTPVVIWLVQALQQRGLRVGVVSRGYGGKAEYYPLVLGPKTTTDEAGDEPVLIYQRTGATVAVAPVRAQAVKAVLRSAAVDIIITDDGLQHYALARDIEIVVIDGERRFGNGWWLPAGPMRERAARLQSVTAIVTNGGKALPGEMAMRLTPGLAVNLKTGERRPVTELDNIVAMAGIGHPPRFFNTLRQLGVTPLRQVAFADHQHYSAESLYSLTSSGQTLLMTEKDAVKASAFAADNWWYLPVDASLPTAEAEALLATITATSAG</sequence>
<reference key="1">
    <citation type="journal article" date="2008" name="Environ. Microbiol.">
        <title>The genome of Erwinia tasmaniensis strain Et1/99, a non-pathogenic bacterium in the genus Erwinia.</title>
        <authorList>
            <person name="Kube M."/>
            <person name="Migdoll A.M."/>
            <person name="Mueller I."/>
            <person name="Kuhl H."/>
            <person name="Beck A."/>
            <person name="Reinhardt R."/>
            <person name="Geider K."/>
        </authorList>
    </citation>
    <scope>NUCLEOTIDE SEQUENCE [LARGE SCALE GENOMIC DNA]</scope>
    <source>
        <strain>DSM 17950 / CFBP 7177 / CIP 109463 / NCPPB 4357 / Et1/99</strain>
    </source>
</reference>
<gene>
    <name evidence="1" type="primary">lpxK</name>
    <name type="ordered locus">ETA_21380</name>
</gene>
<proteinExistence type="inferred from homology"/>
<keyword id="KW-0067">ATP-binding</keyword>
<keyword id="KW-0418">Kinase</keyword>
<keyword id="KW-0441">Lipid A biosynthesis</keyword>
<keyword id="KW-0444">Lipid biosynthesis</keyword>
<keyword id="KW-0443">Lipid metabolism</keyword>
<keyword id="KW-0547">Nucleotide-binding</keyword>
<keyword id="KW-1185">Reference proteome</keyword>
<keyword id="KW-0808">Transferase</keyword>